<name>AQPZ_SHEON</name>
<accession>Q8EHC1</accession>
<feature type="chain" id="PRO_0000063999" description="Aquaporin Z">
    <location>
        <begin position="1"/>
        <end position="231"/>
    </location>
</feature>
<feature type="transmembrane region" description="Helical" evidence="1">
    <location>
        <begin position="11"/>
        <end position="31"/>
    </location>
</feature>
<feature type="transmembrane region" description="Helical" evidence="1">
    <location>
        <begin position="36"/>
        <end position="56"/>
    </location>
</feature>
<feature type="transmembrane region" description="Helical" evidence="1">
    <location>
        <begin position="84"/>
        <end position="104"/>
    </location>
</feature>
<feature type="transmembrane region" description="Helical" evidence="1">
    <location>
        <begin position="132"/>
        <end position="152"/>
    </location>
</feature>
<feature type="transmembrane region" description="Helical" evidence="1">
    <location>
        <begin position="161"/>
        <end position="181"/>
    </location>
</feature>
<feature type="transmembrane region" description="Helical" evidence="1">
    <location>
        <begin position="203"/>
        <end position="223"/>
    </location>
</feature>
<feature type="short sequence motif" description="NPA 1" evidence="1">
    <location>
        <begin position="65"/>
        <end position="67"/>
    </location>
</feature>
<feature type="short sequence motif" description="NPA 2" evidence="1">
    <location>
        <begin position="187"/>
        <end position="189"/>
    </location>
</feature>
<feature type="site" description="Involved in tetramerization or stability of the tetramer" evidence="1">
    <location>
        <position position="22"/>
    </location>
</feature>
<feature type="site" description="Selectivity filter" evidence="1">
    <location>
        <position position="45"/>
    </location>
</feature>
<feature type="site" description="Selectivity filter" evidence="1">
    <location>
        <position position="175"/>
    </location>
</feature>
<feature type="site" description="Selectivity filter" evidence="1">
    <location>
        <position position="184"/>
    </location>
</feature>
<feature type="site" description="Selectivity filter" evidence="1">
    <location>
        <position position="190"/>
    </location>
</feature>
<keyword id="KW-0997">Cell inner membrane</keyword>
<keyword id="KW-1003">Cell membrane</keyword>
<keyword id="KW-0472">Membrane</keyword>
<keyword id="KW-1185">Reference proteome</keyword>
<keyword id="KW-0677">Repeat</keyword>
<keyword id="KW-0812">Transmembrane</keyword>
<keyword id="KW-1133">Transmembrane helix</keyword>
<keyword id="KW-0813">Transport</keyword>
<reference key="1">
    <citation type="journal article" date="2002" name="Nat. Biotechnol.">
        <title>Genome sequence of the dissimilatory metal ion-reducing bacterium Shewanella oneidensis.</title>
        <authorList>
            <person name="Heidelberg J.F."/>
            <person name="Paulsen I.T."/>
            <person name="Nelson K.E."/>
            <person name="Gaidos E.J."/>
            <person name="Nelson W.C."/>
            <person name="Read T.D."/>
            <person name="Eisen J.A."/>
            <person name="Seshadri R."/>
            <person name="Ward N.L."/>
            <person name="Methe B.A."/>
            <person name="Clayton R.A."/>
            <person name="Meyer T."/>
            <person name="Tsapin A."/>
            <person name="Scott J."/>
            <person name="Beanan M.J."/>
            <person name="Brinkac L.M."/>
            <person name="Daugherty S.C."/>
            <person name="DeBoy R.T."/>
            <person name="Dodson R.J."/>
            <person name="Durkin A.S."/>
            <person name="Haft D.H."/>
            <person name="Kolonay J.F."/>
            <person name="Madupu R."/>
            <person name="Peterson J.D."/>
            <person name="Umayam L.A."/>
            <person name="White O."/>
            <person name="Wolf A.M."/>
            <person name="Vamathevan J.J."/>
            <person name="Weidman J.F."/>
            <person name="Impraim M."/>
            <person name="Lee K."/>
            <person name="Berry K.J."/>
            <person name="Lee C."/>
            <person name="Mueller J."/>
            <person name="Khouri H.M."/>
            <person name="Gill J."/>
            <person name="Utterback T.R."/>
            <person name="McDonald L.A."/>
            <person name="Feldblyum T.V."/>
            <person name="Smith H.O."/>
            <person name="Venter J.C."/>
            <person name="Nealson K.H."/>
            <person name="Fraser C.M."/>
        </authorList>
    </citation>
    <scope>NUCLEOTIDE SEQUENCE [LARGE SCALE GENOMIC DNA]</scope>
    <source>
        <strain>ATCC 700550 / JCM 31522 / CIP 106686 / LMG 19005 / NCIMB 14063 / MR-1</strain>
    </source>
</reference>
<evidence type="ECO:0000255" key="1">
    <source>
        <dbReference type="HAMAP-Rule" id="MF_01146"/>
    </source>
</evidence>
<protein>
    <recommendedName>
        <fullName evidence="1">Aquaporin Z</fullName>
    </recommendedName>
</protein>
<organism>
    <name type="scientific">Shewanella oneidensis (strain ATCC 700550 / JCM 31522 / CIP 106686 / LMG 19005 / NCIMB 14063 / MR-1)</name>
    <dbReference type="NCBI Taxonomy" id="211586"/>
    <lineage>
        <taxon>Bacteria</taxon>
        <taxon>Pseudomonadati</taxon>
        <taxon>Pseudomonadota</taxon>
        <taxon>Gammaproteobacteria</taxon>
        <taxon>Alteromonadales</taxon>
        <taxon>Shewanellaceae</taxon>
        <taxon>Shewanella</taxon>
    </lineage>
</organism>
<sequence>MNMSQKMAAEFLGTLWLVLGGCGSAVLAAAFPEVGIGLLGVSLAFGLTVLTMAFAIGHISGCHLNPAVSFGLWAGGRFPTSELLPYIIAQVAGGIAGAGVLYLIASGQEGFSLAAGFASNGFGEHSPGGYSMISVMICEIVMTLFFLLVILGSTDERAPKGFAPIAIGLCLTLIHLISIPISNTSVNPARSTGPALFVGDWAVSQLWLFWAAPIIGAILAGVIYRYFNAAK</sequence>
<comment type="function">
    <text evidence="1">Channel that permits osmotically driven movement of water in both directions. It is involved in the osmoregulation and in the maintenance of cell turgor during volume expansion in rapidly growing cells. It mediates rapid entry or exit of water in response to abrupt changes in osmolarity.</text>
</comment>
<comment type="catalytic activity">
    <reaction evidence="1">
        <text>H2O(in) = H2O(out)</text>
        <dbReference type="Rhea" id="RHEA:29667"/>
        <dbReference type="ChEBI" id="CHEBI:15377"/>
    </reaction>
    <physiologicalReaction direction="left-to-right" evidence="1">
        <dbReference type="Rhea" id="RHEA:29668"/>
    </physiologicalReaction>
    <physiologicalReaction direction="right-to-left" evidence="1">
        <dbReference type="Rhea" id="RHEA:29669"/>
    </physiologicalReaction>
</comment>
<comment type="subunit">
    <text evidence="1">Homotetramer.</text>
</comment>
<comment type="subcellular location">
    <subcellularLocation>
        <location evidence="1">Cell inner membrane</location>
        <topology evidence="1">Multi-pass membrane protein</topology>
    </subcellularLocation>
</comment>
<comment type="domain">
    <text evidence="1">Aquaporins contain two tandem repeats each containing three membrane-spanning domains and a pore-forming loop with the signature motif Asn-Pro-Ala (NPA).</text>
</comment>
<comment type="similarity">
    <text evidence="1">Belongs to the MIP/aquaporin (TC 1.A.8) family.</text>
</comment>
<dbReference type="EMBL" id="AE014299">
    <property type="protein sequence ID" value="AAN54372.2"/>
    <property type="molecule type" value="Genomic_DNA"/>
</dbReference>
<dbReference type="RefSeq" id="NP_716927.2">
    <property type="nucleotide sequence ID" value="NC_004347.2"/>
</dbReference>
<dbReference type="RefSeq" id="WP_011071520.1">
    <property type="nucleotide sequence ID" value="NC_004347.2"/>
</dbReference>
<dbReference type="SMR" id="Q8EHC1"/>
<dbReference type="STRING" id="211586.SO_1307"/>
<dbReference type="PaxDb" id="211586-SO_1307"/>
<dbReference type="KEGG" id="son:SO_1307"/>
<dbReference type="PATRIC" id="fig|211586.12.peg.1257"/>
<dbReference type="eggNOG" id="COG0580">
    <property type="taxonomic scope" value="Bacteria"/>
</dbReference>
<dbReference type="HOGENOM" id="CLU_020019_3_2_6"/>
<dbReference type="OrthoDB" id="9807293at2"/>
<dbReference type="PhylomeDB" id="Q8EHC1"/>
<dbReference type="BioCyc" id="SONE211586:G1GMP-1209-MONOMER"/>
<dbReference type="Proteomes" id="UP000008186">
    <property type="component" value="Chromosome"/>
</dbReference>
<dbReference type="GO" id="GO:0005886">
    <property type="term" value="C:plasma membrane"/>
    <property type="evidence" value="ECO:0000318"/>
    <property type="project" value="GO_Central"/>
</dbReference>
<dbReference type="GO" id="GO:0015250">
    <property type="term" value="F:water channel activity"/>
    <property type="evidence" value="ECO:0000318"/>
    <property type="project" value="GO_Central"/>
</dbReference>
<dbReference type="GO" id="GO:0006833">
    <property type="term" value="P:water transport"/>
    <property type="evidence" value="ECO:0000318"/>
    <property type="project" value="GO_Central"/>
</dbReference>
<dbReference type="CDD" id="cd00333">
    <property type="entry name" value="MIP"/>
    <property type="match status" value="1"/>
</dbReference>
<dbReference type="FunFam" id="1.20.1080.10:FF:000007">
    <property type="entry name" value="Aquaporin Z"/>
    <property type="match status" value="1"/>
</dbReference>
<dbReference type="Gene3D" id="1.20.1080.10">
    <property type="entry name" value="Glycerol uptake facilitator protein"/>
    <property type="match status" value="1"/>
</dbReference>
<dbReference type="HAMAP" id="MF_01146">
    <property type="entry name" value="Aquaporin_Z"/>
    <property type="match status" value="1"/>
</dbReference>
<dbReference type="InterPro" id="IPR023271">
    <property type="entry name" value="Aquaporin-like"/>
</dbReference>
<dbReference type="InterPro" id="IPR034294">
    <property type="entry name" value="Aquaporin_transptr"/>
</dbReference>
<dbReference type="InterPro" id="IPR023743">
    <property type="entry name" value="Aquaporin_Z"/>
</dbReference>
<dbReference type="InterPro" id="IPR000425">
    <property type="entry name" value="MIP"/>
</dbReference>
<dbReference type="InterPro" id="IPR022357">
    <property type="entry name" value="MIP_CS"/>
</dbReference>
<dbReference type="NCBIfam" id="TIGR00861">
    <property type="entry name" value="MIP"/>
    <property type="match status" value="1"/>
</dbReference>
<dbReference type="NCBIfam" id="NF003838">
    <property type="entry name" value="PRK05420.1"/>
    <property type="match status" value="1"/>
</dbReference>
<dbReference type="PANTHER" id="PTHR19139">
    <property type="entry name" value="AQUAPORIN TRANSPORTER"/>
    <property type="match status" value="1"/>
</dbReference>
<dbReference type="PANTHER" id="PTHR19139:SF199">
    <property type="entry name" value="MIP17260P"/>
    <property type="match status" value="1"/>
</dbReference>
<dbReference type="Pfam" id="PF00230">
    <property type="entry name" value="MIP"/>
    <property type="match status" value="1"/>
</dbReference>
<dbReference type="PRINTS" id="PR00783">
    <property type="entry name" value="MINTRINSICP"/>
</dbReference>
<dbReference type="SUPFAM" id="SSF81338">
    <property type="entry name" value="Aquaporin-like"/>
    <property type="match status" value="1"/>
</dbReference>
<dbReference type="PROSITE" id="PS00221">
    <property type="entry name" value="MIP"/>
    <property type="match status" value="1"/>
</dbReference>
<gene>
    <name evidence="1" type="primary">aqpZ</name>
    <name type="ordered locus">SO_1307</name>
</gene>
<proteinExistence type="inferred from homology"/>